<accession>P83683</accession>
<reference evidence="2" key="1">
    <citation type="journal article" date="2003" name="Proc. Natl. Acad. Sci. U.S.A.">
        <title>Identification of 26RFa, a hypothalamic neuropeptide of the RFamide peptide family with orexigenic activity.</title>
        <authorList>
            <person name="Chartrel N."/>
            <person name="Dujardin C."/>
            <person name="Anouar Y."/>
            <person name="Leprince J."/>
            <person name="Decker A."/>
            <person name="Clerens S."/>
            <person name="Do-Rego J.-C."/>
            <person name="Vandesande F."/>
            <person name="Llorens-Cortes C."/>
            <person name="Costentin J."/>
            <person name="Beauvillain J.-C."/>
            <person name="Vaudry H."/>
        </authorList>
    </citation>
    <scope>PROTEIN SEQUENCE</scope>
    <scope>FUNCTION</scope>
    <scope>TISSUE SPECIFICITY</scope>
    <scope>MASS SPECTROMETRY</scope>
    <scope>AMIDATION AT PHE-26</scope>
    <source>
        <tissue evidence="1">Brain</tissue>
    </source>
</reference>
<name>OX26_PELLE</name>
<feature type="peptide" id="PRO_0000043717" description="Orexigenic neuropeptide 26RFa">
    <location>
        <begin position="1"/>
        <end position="26"/>
    </location>
</feature>
<feature type="modified residue" description="Phenylalanine amide" evidence="1">
    <location>
        <position position="26"/>
    </location>
</feature>
<organism evidence="2">
    <name type="scientific">Pelophylax lessonae</name>
    <name type="common">Pool frog</name>
    <name type="synonym">Rana lessonae</name>
    <dbReference type="NCBI Taxonomy" id="45623"/>
    <lineage>
        <taxon>Eukaryota</taxon>
        <taxon>Metazoa</taxon>
        <taxon>Chordata</taxon>
        <taxon>Craniata</taxon>
        <taxon>Vertebrata</taxon>
        <taxon>Euteleostomi</taxon>
        <taxon>Amphibia</taxon>
        <taxon>Batrachia</taxon>
        <taxon>Anura</taxon>
        <taxon>Neobatrachia</taxon>
        <taxon>Ranoidea</taxon>
        <taxon>Ranidae</taxon>
        <taxon>Pelophylax</taxon>
    </lineage>
</organism>
<comment type="function">
    <text evidence="1">May have orexigenic activity. May promote aldosterone secretion by the adrenal gland.</text>
</comment>
<comment type="subcellular location">
    <subcellularLocation>
        <location>Secreted</location>
    </subcellularLocation>
</comment>
<comment type="tissue specificity">
    <text evidence="1">Brain.</text>
</comment>
<comment type="mass spectrometry" mass="2828.3" method="Electrospray" evidence="1"/>
<comment type="similarity">
    <text evidence="2">Belongs to the RFamide neuropeptide family.</text>
</comment>
<dbReference type="SMR" id="P83683"/>
<dbReference type="GO" id="GO:0005576">
    <property type="term" value="C:extracellular region"/>
    <property type="evidence" value="ECO:0007669"/>
    <property type="project" value="UniProtKB-SubCell"/>
</dbReference>
<dbReference type="GO" id="GO:0005184">
    <property type="term" value="F:neuropeptide hormone activity"/>
    <property type="evidence" value="ECO:0000314"/>
    <property type="project" value="UniProtKB"/>
</dbReference>
<dbReference type="GO" id="GO:0031854">
    <property type="term" value="F:orexigenic neuropeptide QRFP receptor binding"/>
    <property type="evidence" value="ECO:0000250"/>
    <property type="project" value="UniProtKB"/>
</dbReference>
<dbReference type="GO" id="GO:0007218">
    <property type="term" value="P:neuropeptide signaling pathway"/>
    <property type="evidence" value="ECO:0000314"/>
    <property type="project" value="UniProtKB"/>
</dbReference>
<dbReference type="InterPro" id="IPR024565">
    <property type="entry name" value="P518"/>
</dbReference>
<dbReference type="PANTHER" id="PTHR36476">
    <property type="entry name" value="OREXIGENIC NEUROPEPTIDE QRFP"/>
    <property type="match status" value="1"/>
</dbReference>
<dbReference type="PANTHER" id="PTHR36476:SF1">
    <property type="entry name" value="OREXIGENIC NEUROPEPTIDE QRFP"/>
    <property type="match status" value="1"/>
</dbReference>
<dbReference type="Pfam" id="PF11109">
    <property type="entry name" value="RFamide_26RFa"/>
    <property type="match status" value="1"/>
</dbReference>
<keyword id="KW-0027">Amidation</keyword>
<keyword id="KW-0903">Direct protein sequencing</keyword>
<keyword id="KW-0527">Neuropeptide</keyword>
<keyword id="KW-0964">Secreted</keyword>
<evidence type="ECO:0000269" key="1">
    <source>
    </source>
</evidence>
<evidence type="ECO:0000305" key="2"/>
<sequence length="26" mass="2819">VGTALGSLAEELNGYNRKKGGFSFRF</sequence>
<proteinExistence type="evidence at protein level"/>
<protein>
    <recommendedName>
        <fullName>Orexigenic neuropeptide 26RFa</fullName>
    </recommendedName>
</protein>